<protein>
    <recommendedName>
        <fullName evidence="1">S-adenosylmethionine:tRNA ribosyltransferase-isomerase</fullName>
        <ecNumber evidence="1">2.4.99.17</ecNumber>
    </recommendedName>
    <alternativeName>
        <fullName evidence="1">Queuosine biosynthesis protein QueA</fullName>
    </alternativeName>
</protein>
<sequence>MKVKDFDFYLPEELIAQHPMEKRDEARLLVLDKETGEIEHKIFKDILDYLTPNDCLVLNNTRVLPARLIGAKEETGGKMEFLLLKRKEKDVWETLVKPGKRAQIGARFIFGNGELKAEVIGMGEEGSRIVKFYYEGIFEEILDQLGQMPLPPYIKEKLDDKEMYQTVYSKEEGSAAAPTAGLHFTEELLKKIKEKGVKLAFLTLHVGLGTFRPVKVEDIQEHVMHSEYYKMDKETAEIINDTKEKGGRVIAVGTTSCRTLETIGDIEGKVREQSGWTDIFIYPGYKYKVVDALITNFHLPQSTLLMLVSALAGRDNIMNAYNVAVEKEYRFFSFGDAMFIK</sequence>
<dbReference type="EC" id="2.4.99.17" evidence="1"/>
<dbReference type="EMBL" id="CP000962">
    <property type="protein sequence ID" value="ACA57051.1"/>
    <property type="molecule type" value="Genomic_DNA"/>
</dbReference>
<dbReference type="RefSeq" id="WP_012344842.1">
    <property type="nucleotide sequence ID" value="NC_010520.1"/>
</dbReference>
<dbReference type="SMR" id="B1L0B1"/>
<dbReference type="KEGG" id="cbl:CLK_2462"/>
<dbReference type="HOGENOM" id="CLU_039110_1_0_9"/>
<dbReference type="UniPathway" id="UPA00392"/>
<dbReference type="GO" id="GO:0005737">
    <property type="term" value="C:cytoplasm"/>
    <property type="evidence" value="ECO:0007669"/>
    <property type="project" value="UniProtKB-SubCell"/>
</dbReference>
<dbReference type="GO" id="GO:0051075">
    <property type="term" value="F:S-adenosylmethionine:tRNA ribosyltransferase-isomerase activity"/>
    <property type="evidence" value="ECO:0007669"/>
    <property type="project" value="UniProtKB-EC"/>
</dbReference>
<dbReference type="GO" id="GO:0008616">
    <property type="term" value="P:queuosine biosynthetic process"/>
    <property type="evidence" value="ECO:0007669"/>
    <property type="project" value="UniProtKB-UniRule"/>
</dbReference>
<dbReference type="GO" id="GO:0002099">
    <property type="term" value="P:tRNA wobble guanine modification"/>
    <property type="evidence" value="ECO:0007669"/>
    <property type="project" value="TreeGrafter"/>
</dbReference>
<dbReference type="FunFam" id="2.40.10.240:FF:000002">
    <property type="entry name" value="S-adenosylmethionine:tRNA ribosyltransferase-isomerase"/>
    <property type="match status" value="1"/>
</dbReference>
<dbReference type="FunFam" id="3.40.1780.10:FF:000001">
    <property type="entry name" value="S-adenosylmethionine:tRNA ribosyltransferase-isomerase"/>
    <property type="match status" value="1"/>
</dbReference>
<dbReference type="Gene3D" id="2.40.10.240">
    <property type="entry name" value="QueA-like"/>
    <property type="match status" value="1"/>
</dbReference>
<dbReference type="Gene3D" id="3.40.1780.10">
    <property type="entry name" value="QueA-like"/>
    <property type="match status" value="1"/>
</dbReference>
<dbReference type="HAMAP" id="MF_00113">
    <property type="entry name" value="QueA"/>
    <property type="match status" value="1"/>
</dbReference>
<dbReference type="InterPro" id="IPR003699">
    <property type="entry name" value="QueA"/>
</dbReference>
<dbReference type="InterPro" id="IPR042118">
    <property type="entry name" value="QueA_dom1"/>
</dbReference>
<dbReference type="InterPro" id="IPR042119">
    <property type="entry name" value="QueA_dom2"/>
</dbReference>
<dbReference type="InterPro" id="IPR036100">
    <property type="entry name" value="QueA_sf"/>
</dbReference>
<dbReference type="NCBIfam" id="NF001140">
    <property type="entry name" value="PRK00147.1"/>
    <property type="match status" value="1"/>
</dbReference>
<dbReference type="NCBIfam" id="TIGR00113">
    <property type="entry name" value="queA"/>
    <property type="match status" value="1"/>
</dbReference>
<dbReference type="PANTHER" id="PTHR30307">
    <property type="entry name" value="S-ADENOSYLMETHIONINE:TRNA RIBOSYLTRANSFERASE-ISOMERASE"/>
    <property type="match status" value="1"/>
</dbReference>
<dbReference type="PANTHER" id="PTHR30307:SF0">
    <property type="entry name" value="S-ADENOSYLMETHIONINE:TRNA RIBOSYLTRANSFERASE-ISOMERASE"/>
    <property type="match status" value="1"/>
</dbReference>
<dbReference type="Pfam" id="PF02547">
    <property type="entry name" value="Queuosine_synth"/>
    <property type="match status" value="1"/>
</dbReference>
<dbReference type="SUPFAM" id="SSF111337">
    <property type="entry name" value="QueA-like"/>
    <property type="match status" value="1"/>
</dbReference>
<proteinExistence type="inferred from homology"/>
<accession>B1L0B1</accession>
<feature type="chain" id="PRO_1000094768" description="S-adenosylmethionine:tRNA ribosyltransferase-isomerase">
    <location>
        <begin position="1"/>
        <end position="341"/>
    </location>
</feature>
<name>QUEA_CLOBM</name>
<evidence type="ECO:0000255" key="1">
    <source>
        <dbReference type="HAMAP-Rule" id="MF_00113"/>
    </source>
</evidence>
<reference key="1">
    <citation type="journal article" date="2007" name="PLoS ONE">
        <title>Analysis of the neurotoxin complex genes in Clostridium botulinum A1-A4 and B1 strains: BoNT/A3, /Ba4 and /B1 clusters are located within plasmids.</title>
        <authorList>
            <person name="Smith T.J."/>
            <person name="Hill K.K."/>
            <person name="Foley B.T."/>
            <person name="Detter J.C."/>
            <person name="Munk A.C."/>
            <person name="Bruce D.C."/>
            <person name="Doggett N.A."/>
            <person name="Smith L.A."/>
            <person name="Marks J.D."/>
            <person name="Xie G."/>
            <person name="Brettin T.S."/>
        </authorList>
    </citation>
    <scope>NUCLEOTIDE SEQUENCE [LARGE SCALE GENOMIC DNA]</scope>
    <source>
        <strain>Loch Maree / Type A3</strain>
    </source>
</reference>
<gene>
    <name evidence="1" type="primary">queA</name>
    <name type="ordered locus">CLK_2462</name>
</gene>
<comment type="function">
    <text evidence="1">Transfers and isomerizes the ribose moiety from AdoMet to the 7-aminomethyl group of 7-deazaguanine (preQ1-tRNA) to give epoxyqueuosine (oQ-tRNA).</text>
</comment>
<comment type="catalytic activity">
    <reaction evidence="1">
        <text>7-aminomethyl-7-carbaguanosine(34) in tRNA + S-adenosyl-L-methionine = epoxyqueuosine(34) in tRNA + adenine + L-methionine + 2 H(+)</text>
        <dbReference type="Rhea" id="RHEA:32155"/>
        <dbReference type="Rhea" id="RHEA-COMP:10342"/>
        <dbReference type="Rhea" id="RHEA-COMP:18582"/>
        <dbReference type="ChEBI" id="CHEBI:15378"/>
        <dbReference type="ChEBI" id="CHEBI:16708"/>
        <dbReference type="ChEBI" id="CHEBI:57844"/>
        <dbReference type="ChEBI" id="CHEBI:59789"/>
        <dbReference type="ChEBI" id="CHEBI:82833"/>
        <dbReference type="ChEBI" id="CHEBI:194443"/>
        <dbReference type="EC" id="2.4.99.17"/>
    </reaction>
</comment>
<comment type="pathway">
    <text evidence="1">tRNA modification; tRNA-queuosine biosynthesis.</text>
</comment>
<comment type="subunit">
    <text evidence="1">Monomer.</text>
</comment>
<comment type="subcellular location">
    <subcellularLocation>
        <location evidence="1">Cytoplasm</location>
    </subcellularLocation>
</comment>
<comment type="similarity">
    <text evidence="1">Belongs to the QueA family.</text>
</comment>
<keyword id="KW-0963">Cytoplasm</keyword>
<keyword id="KW-0671">Queuosine biosynthesis</keyword>
<keyword id="KW-0949">S-adenosyl-L-methionine</keyword>
<keyword id="KW-0808">Transferase</keyword>
<organism>
    <name type="scientific">Clostridium botulinum (strain Loch Maree / Type A3)</name>
    <dbReference type="NCBI Taxonomy" id="498214"/>
    <lineage>
        <taxon>Bacteria</taxon>
        <taxon>Bacillati</taxon>
        <taxon>Bacillota</taxon>
        <taxon>Clostridia</taxon>
        <taxon>Eubacteriales</taxon>
        <taxon>Clostridiaceae</taxon>
        <taxon>Clostridium</taxon>
    </lineage>
</organism>